<evidence type="ECO:0000250" key="1"/>
<evidence type="ECO:0000255" key="2"/>
<evidence type="ECO:0000255" key="3">
    <source>
        <dbReference type="PROSITE-ProRule" id="PRU00283"/>
    </source>
</evidence>
<evidence type="ECO:0000256" key="4">
    <source>
        <dbReference type="SAM" id="MobiDB-lite"/>
    </source>
</evidence>
<evidence type="ECO:0000269" key="5">
    <source>
    </source>
</evidence>
<evidence type="ECO:0000269" key="6">
    <source>
    </source>
</evidence>
<gene>
    <name type="primary">kif7</name>
    <name type="synonym">cos2</name>
</gene>
<reference key="1">
    <citation type="journal article" date="2005" name="Development">
        <title>A homologue of the Drosophila kinesin-like protein Costal2 regulates Hedgehog signal transduction in the vertebrate embryo.</title>
        <authorList>
            <person name="Tay S.Y."/>
            <person name="Ingham P.W."/>
            <person name="Roy S."/>
        </authorList>
    </citation>
    <scope>NUCLEOTIDE SEQUENCE [MRNA]</scope>
    <scope>FUNCTION</scope>
    <scope>SUBCELLULAR LOCATION</scope>
    <scope>INTERACTION WITH GLI1</scope>
</reference>
<reference key="2">
    <citation type="journal article" date="2013" name="PLoS Genet.">
        <title>Positive and negative regulation of Gli activity by Kif7 in the zebrafish embryo.</title>
        <authorList>
            <person name="Maurya A.K."/>
            <person name="Ben J."/>
            <person name="Zhao Z."/>
            <person name="Lee R.T."/>
            <person name="Niah W."/>
            <person name="Ng A.S."/>
            <person name="Iyu A."/>
            <person name="Yu W."/>
            <person name="Elworthy S."/>
            <person name="van Eeden F.J."/>
            <person name="Ingham P.W."/>
        </authorList>
    </citation>
    <scope>FUNCTION</scope>
    <scope>INTERACTION WITH GLI1 AND SUFU</scope>
</reference>
<dbReference type="EMBL" id="AY954727">
    <property type="protein sequence ID" value="AAX55642.1"/>
    <property type="molecule type" value="mRNA"/>
</dbReference>
<dbReference type="RefSeq" id="NP_001014816.1">
    <property type="nucleotide sequence ID" value="NM_001014816.1"/>
</dbReference>
<dbReference type="SMR" id="Q58G59"/>
<dbReference type="BioGRID" id="95186">
    <property type="interactions" value="1"/>
</dbReference>
<dbReference type="FunCoup" id="Q58G59">
    <property type="interactions" value="759"/>
</dbReference>
<dbReference type="STRING" id="7955.ENSDARP00000041576"/>
<dbReference type="PaxDb" id="7955-ENSDARP00000041576"/>
<dbReference type="GeneID" id="544651"/>
<dbReference type="KEGG" id="dre:544651"/>
<dbReference type="AGR" id="ZFIN:ZDB-GENE-050307-1"/>
<dbReference type="CTD" id="374654"/>
<dbReference type="ZFIN" id="ZDB-GENE-050307-1">
    <property type="gene designation" value="kif7"/>
</dbReference>
<dbReference type="eggNOG" id="KOG0244">
    <property type="taxonomic scope" value="Eukaryota"/>
</dbReference>
<dbReference type="InParanoid" id="Q58G59"/>
<dbReference type="OrthoDB" id="3176171at2759"/>
<dbReference type="PhylomeDB" id="Q58G59"/>
<dbReference type="Reactome" id="R-DRE-5632684">
    <property type="pathway name" value="Hedgehog 'on' state"/>
</dbReference>
<dbReference type="SignaLink" id="Q58G59"/>
<dbReference type="PRO" id="PR:Q58G59"/>
<dbReference type="Proteomes" id="UP000000437">
    <property type="component" value="Chromosome 7"/>
</dbReference>
<dbReference type="GO" id="GO:0005929">
    <property type="term" value="C:cilium"/>
    <property type="evidence" value="ECO:0000314"/>
    <property type="project" value="ZFIN"/>
</dbReference>
<dbReference type="GO" id="GO:0005737">
    <property type="term" value="C:cytoplasm"/>
    <property type="evidence" value="ECO:0000314"/>
    <property type="project" value="ZFIN"/>
</dbReference>
<dbReference type="GO" id="GO:0035301">
    <property type="term" value="C:Hedgehog signaling complex"/>
    <property type="evidence" value="ECO:0000314"/>
    <property type="project" value="ZFIN"/>
</dbReference>
<dbReference type="GO" id="GO:0005871">
    <property type="term" value="C:kinesin complex"/>
    <property type="evidence" value="ECO:0000318"/>
    <property type="project" value="GO_Central"/>
</dbReference>
<dbReference type="GO" id="GO:0005874">
    <property type="term" value="C:microtubule"/>
    <property type="evidence" value="ECO:0000318"/>
    <property type="project" value="GO_Central"/>
</dbReference>
<dbReference type="GO" id="GO:0005524">
    <property type="term" value="F:ATP binding"/>
    <property type="evidence" value="ECO:0007669"/>
    <property type="project" value="UniProtKB-KW"/>
</dbReference>
<dbReference type="GO" id="GO:0016887">
    <property type="term" value="F:ATP hydrolysis activity"/>
    <property type="evidence" value="ECO:0000318"/>
    <property type="project" value="GO_Central"/>
</dbReference>
<dbReference type="GO" id="GO:0008017">
    <property type="term" value="F:microtubule binding"/>
    <property type="evidence" value="ECO:0000318"/>
    <property type="project" value="GO_Central"/>
</dbReference>
<dbReference type="GO" id="GO:0003777">
    <property type="term" value="F:microtubule motor activity"/>
    <property type="evidence" value="ECO:0000318"/>
    <property type="project" value="GO_Central"/>
</dbReference>
<dbReference type="GO" id="GO:0007368">
    <property type="term" value="P:determination of left/right symmetry"/>
    <property type="evidence" value="ECO:0000315"/>
    <property type="project" value="ZFIN"/>
</dbReference>
<dbReference type="GO" id="GO:0007018">
    <property type="term" value="P:microtubule-based movement"/>
    <property type="evidence" value="ECO:0000318"/>
    <property type="project" value="GO_Central"/>
</dbReference>
<dbReference type="GO" id="GO:0045879">
    <property type="term" value="P:negative regulation of smoothened signaling pathway"/>
    <property type="evidence" value="ECO:0000315"/>
    <property type="project" value="ZFIN"/>
</dbReference>
<dbReference type="GO" id="GO:0035845">
    <property type="term" value="P:photoreceptor cell outer segment organization"/>
    <property type="evidence" value="ECO:0000315"/>
    <property type="project" value="ZFIN"/>
</dbReference>
<dbReference type="CDD" id="cd01372">
    <property type="entry name" value="KISc_KIF4"/>
    <property type="match status" value="1"/>
</dbReference>
<dbReference type="FunFam" id="3.40.850.10:FF:000025">
    <property type="entry name" value="kinesin-like protein KIF27 isoform X1"/>
    <property type="match status" value="1"/>
</dbReference>
<dbReference type="Gene3D" id="3.40.850.10">
    <property type="entry name" value="Kinesin motor domain"/>
    <property type="match status" value="1"/>
</dbReference>
<dbReference type="InterPro" id="IPR027640">
    <property type="entry name" value="Kinesin-like_fam"/>
</dbReference>
<dbReference type="InterPro" id="IPR019821">
    <property type="entry name" value="Kinesin_motor_CS"/>
</dbReference>
<dbReference type="InterPro" id="IPR001752">
    <property type="entry name" value="Kinesin_motor_dom"/>
</dbReference>
<dbReference type="InterPro" id="IPR036961">
    <property type="entry name" value="Kinesin_motor_dom_sf"/>
</dbReference>
<dbReference type="InterPro" id="IPR027417">
    <property type="entry name" value="P-loop_NTPase"/>
</dbReference>
<dbReference type="PANTHER" id="PTHR47969">
    <property type="entry name" value="CHROMOSOME-ASSOCIATED KINESIN KIF4A-RELATED"/>
    <property type="match status" value="1"/>
</dbReference>
<dbReference type="PANTHER" id="PTHR47969:SF8">
    <property type="entry name" value="KINESIN FAMILY MEMBER 7"/>
    <property type="match status" value="1"/>
</dbReference>
<dbReference type="Pfam" id="PF00225">
    <property type="entry name" value="Kinesin"/>
    <property type="match status" value="1"/>
</dbReference>
<dbReference type="PRINTS" id="PR00380">
    <property type="entry name" value="KINESINHEAVY"/>
</dbReference>
<dbReference type="SMART" id="SM00129">
    <property type="entry name" value="KISc"/>
    <property type="match status" value="1"/>
</dbReference>
<dbReference type="SUPFAM" id="SSF52540">
    <property type="entry name" value="P-loop containing nucleoside triphosphate hydrolases"/>
    <property type="match status" value="1"/>
</dbReference>
<dbReference type="PROSITE" id="PS00411">
    <property type="entry name" value="KINESIN_MOTOR_1"/>
    <property type="match status" value="1"/>
</dbReference>
<dbReference type="PROSITE" id="PS50067">
    <property type="entry name" value="KINESIN_MOTOR_2"/>
    <property type="match status" value="1"/>
</dbReference>
<name>KIF7_DANRE</name>
<comment type="function">
    <text evidence="5 6">Acts downstream of smo as an intracellular repressor of hedgehog signaling pathway, mainly through the suppression of gli1 activity. This negative regulatory effect is enhanced in conjunction with the suppressor of fused (sufu) protein. Positively regulates gli2a activity by promoting its dissociation from sufu. Involved in the regulation of microtubular dynamics.</text>
</comment>
<comment type="subunit">
    <text evidence="5 6">Binds microtubules. Interacts with gli1 and sufu.</text>
</comment>
<comment type="subcellular location">
    <subcellularLocation>
        <location evidence="5">Cytoplasm</location>
        <location evidence="5">Cytoskeleton</location>
    </subcellularLocation>
    <subcellularLocation>
        <location evidence="1">Cell projection</location>
        <location evidence="1">Cilium</location>
    </subcellularLocation>
</comment>
<comment type="similarity">
    <text evidence="3">Belongs to the TRAFAC class myosin-kinesin ATPase superfamily. Kinesin family. KIF27 subfamily.</text>
</comment>
<protein>
    <recommendedName>
        <fullName>Kinesin-like protein kif7</fullName>
    </recommendedName>
    <alternativeName>
        <fullName>Kinesin-like protein costal2</fullName>
    </alternativeName>
</protein>
<organism>
    <name type="scientific">Danio rerio</name>
    <name type="common">Zebrafish</name>
    <name type="synonym">Brachydanio rerio</name>
    <dbReference type="NCBI Taxonomy" id="7955"/>
    <lineage>
        <taxon>Eukaryota</taxon>
        <taxon>Metazoa</taxon>
        <taxon>Chordata</taxon>
        <taxon>Craniata</taxon>
        <taxon>Vertebrata</taxon>
        <taxon>Euteleostomi</taxon>
        <taxon>Actinopterygii</taxon>
        <taxon>Neopterygii</taxon>
        <taxon>Teleostei</taxon>
        <taxon>Ostariophysi</taxon>
        <taxon>Cypriniformes</taxon>
        <taxon>Danionidae</taxon>
        <taxon>Danioninae</taxon>
        <taxon>Danio</taxon>
    </lineage>
</organism>
<feature type="chain" id="PRO_0000307147" description="Kinesin-like protein kif7">
    <location>
        <begin position="1"/>
        <end position="1363"/>
    </location>
</feature>
<feature type="domain" description="Kinesin motor" evidence="3">
    <location>
        <begin position="15"/>
        <end position="347"/>
    </location>
</feature>
<feature type="region of interest" description="Disordered" evidence="4">
    <location>
        <begin position="603"/>
        <end position="642"/>
    </location>
</feature>
<feature type="region of interest" description="Disordered" evidence="4">
    <location>
        <begin position="1314"/>
        <end position="1346"/>
    </location>
</feature>
<feature type="coiled-coil region" evidence="2">
    <location>
        <begin position="358"/>
        <end position="385"/>
    </location>
</feature>
<feature type="coiled-coil region" evidence="2">
    <location>
        <begin position="491"/>
        <end position="552"/>
    </location>
</feature>
<feature type="coiled-coil region" evidence="2">
    <location>
        <begin position="714"/>
        <end position="1068"/>
    </location>
</feature>
<feature type="coiled-coil region" evidence="2">
    <location>
        <begin position="1116"/>
        <end position="1225"/>
    </location>
</feature>
<feature type="compositionally biased region" description="Polar residues" evidence="4">
    <location>
        <begin position="603"/>
        <end position="622"/>
    </location>
</feature>
<feature type="compositionally biased region" description="Basic and acidic residues" evidence="4">
    <location>
        <begin position="623"/>
        <end position="640"/>
    </location>
</feature>
<feature type="compositionally biased region" description="Polar residues" evidence="4">
    <location>
        <begin position="1318"/>
        <end position="1331"/>
    </location>
</feature>
<feature type="binding site" evidence="3">
    <location>
        <begin position="94"/>
        <end position="101"/>
    </location>
    <ligand>
        <name>ATP</name>
        <dbReference type="ChEBI" id="CHEBI:30616"/>
    </ligand>
</feature>
<keyword id="KW-0067">ATP-binding</keyword>
<keyword id="KW-0966">Cell projection</keyword>
<keyword id="KW-0969">Cilium</keyword>
<keyword id="KW-0175">Coiled coil</keyword>
<keyword id="KW-0963">Cytoplasm</keyword>
<keyword id="KW-0206">Cytoskeleton</keyword>
<keyword id="KW-0493">Microtubule</keyword>
<keyword id="KW-0505">Motor protein</keyword>
<keyword id="KW-0547">Nucleotide-binding</keyword>
<keyword id="KW-1185">Reference proteome</keyword>
<keyword id="KW-0678">Repressor</keyword>
<sequence length="1363" mass="154837">MSPKGVGHSKVEESAVQVAVRVRPLLPKEILHSHESCITSDPEERRVTLGNDRHFHCDFVFEDGSTQEEVYTNCVQPLIEAFFHGFNATVSAYGQTGSGKTYTIGEASISAFRDDEQGIIPRAVAEIFKLLDENDLIDFSVRVSYMEVYKEVFRDLLEVETASKDIHIREDERGNVVLCGVKECEVEGLDEVLSLLESGKTARHTGATQMNPHSSRSHTIFTVLMEQRRGGSRAANGSVQILSSKFHFVDLAGSERILKTGNTGERLKESIQINSGLLVLGNVIGALGDPKRKGTHIPYRDSKITRILKDSLGGNAKTLMIACISPSSSDFDESLNTLNYAKRARNIQNRATVNCRGEPDRIEGLELQIKALRRALENRQRSETRIIARSDPEKRLRPFEVDVRKLQAESAHYRTCTDSAYRLLTELQGEGTLNAGQILRVKEWLCGVEEERSGLTSASGLDSGIESSSTEDSTALKRRQAVLNNQDLVKEDWRGEREDYTSQLQAQIQQLEQENTDFLVALEDAMEQYKQQSDKLQEQQDLIAELHSLLAQPGGAGFLHLKQRPHTAPINSLLQTPDRLTPPCDSDVGRSLARQLDVGASVDSSSYSEQTQWDGTHGNTHCESSRKLNRDEDGHMQTTRDKRKSINVTWTKKDIAIPQGPFGGTRTALPQTLGLCHPLGMQFNRRTSNSSIGESSVWESVRGFGGEFCSDRGLLQAQQKIRELSITIRMKEELIKELVKTGKDAQAMNRQYSRKISELEAEAEQARVELTEAQKQLQELEVQGGRDAVDRSKAQECRRKIAAAQSKVQVLKQKQRDTAQLASLSAQSERRVQELERNVQNMKQQQDLLQRRLREESQQKRRLETEMQKGKHRVKELEIKNEQQQKILRIKTEEIAAFQRQRRSGSNGSVVSLEEQQKIEEQKRWLDEEMEKVLDQRRGLEDLEGELTKREEILAKKEALLWERSGLESKKLRSSQALSQDLLTLSSRIESLERELTERNGLLRSGSAQDSQQIRQEISNLRQEKELLLKQRVELDDKLRQGNLLSPEEERTLFQLDEAIEALDAAIEYKNEAITQRQRQLRASGSMLTQWEMNLMAKLTYLSASETRALLCKYFDKVVSLREEERRLQMALAELELRVEEQQNLVGWLEAALERQQLEADRRLTQQQKEHERNIQLLLQQCREQMDEGLAGRLRQYEGLIHNLSKELNFCKIANQELNIKLREMCGPVNLTGEQCKGLNCDSLLLAGAQSRVAEDVKPIIDAERVQKSREEMREPVNAPLPATWRRSSLPTEDQYTMEELRQRAACELPNNRIVQPGMNSTHWSGSTSLPVTRPRREPRRSSLNTAPLYSSSAIIDVRRNPV</sequence>
<proteinExistence type="evidence at protein level"/>
<accession>Q58G59</accession>